<feature type="chain" id="PRO_0000180011" description="GTPase Era">
    <location>
        <begin position="1"/>
        <end position="311"/>
    </location>
</feature>
<feature type="domain" description="Era-type G" evidence="2">
    <location>
        <begin position="16"/>
        <end position="188"/>
    </location>
</feature>
<feature type="domain" description="KH type-2" evidence="1">
    <location>
        <begin position="219"/>
        <end position="296"/>
    </location>
</feature>
<feature type="region of interest" description="G1" evidence="2">
    <location>
        <begin position="24"/>
        <end position="31"/>
    </location>
</feature>
<feature type="region of interest" description="G2" evidence="2">
    <location>
        <begin position="50"/>
        <end position="54"/>
    </location>
</feature>
<feature type="region of interest" description="G3" evidence="2">
    <location>
        <begin position="71"/>
        <end position="74"/>
    </location>
</feature>
<feature type="region of interest" description="G4" evidence="2">
    <location>
        <begin position="133"/>
        <end position="136"/>
    </location>
</feature>
<feature type="region of interest" description="G5" evidence="2">
    <location>
        <begin position="166"/>
        <end position="168"/>
    </location>
</feature>
<feature type="binding site" evidence="1">
    <location>
        <begin position="24"/>
        <end position="31"/>
    </location>
    <ligand>
        <name>GTP</name>
        <dbReference type="ChEBI" id="CHEBI:37565"/>
    </ligand>
</feature>
<feature type="binding site" evidence="1">
    <location>
        <begin position="71"/>
        <end position="75"/>
    </location>
    <ligand>
        <name>GTP</name>
        <dbReference type="ChEBI" id="CHEBI:37565"/>
    </ligand>
</feature>
<feature type="binding site" evidence="1">
    <location>
        <begin position="133"/>
        <end position="136"/>
    </location>
    <ligand>
        <name>GTP</name>
        <dbReference type="ChEBI" id="CHEBI:37565"/>
    </ligand>
</feature>
<proteinExistence type="inferred from homology"/>
<evidence type="ECO:0000255" key="1">
    <source>
        <dbReference type="HAMAP-Rule" id="MF_00367"/>
    </source>
</evidence>
<evidence type="ECO:0000255" key="2">
    <source>
        <dbReference type="PROSITE-ProRule" id="PRU01050"/>
    </source>
</evidence>
<accession>Q9RWM0</accession>
<sequence>MTDFSASPDLQDPTTHAGFVAIVGKPNVGKSTLLNAFLGTKVAPTSPRPQTTRRGVRGIYTLDNRQLIFVDTPGLHKPKDALGKYMNSEVHSALSDVDAVVWVVDLRHPPTDEDRLVANSVRDLPKPLFLVGNKTDAAKYPEEAMKLYGALLEGRGSDLPVSETMLSAQNSVNAVATLREQLLEVLPENPFFFPQGAASDQSREMWAAEIIREEAMKKLRDELPYAVATRVNRWTEREDGLQRIEGEIIVEKNAHKGMVIGAGGKQLREIGQAARKQLEVFLNHKVYLGLEVIVIPGWREDEEALRELGYE</sequence>
<keyword id="KW-1003">Cell membrane</keyword>
<keyword id="KW-0963">Cytoplasm</keyword>
<keyword id="KW-0342">GTP-binding</keyword>
<keyword id="KW-0472">Membrane</keyword>
<keyword id="KW-0547">Nucleotide-binding</keyword>
<keyword id="KW-1185">Reference proteome</keyword>
<keyword id="KW-0690">Ribosome biogenesis</keyword>
<keyword id="KW-0694">RNA-binding</keyword>
<keyword id="KW-0699">rRNA-binding</keyword>
<name>ERA_DEIRA</name>
<comment type="function">
    <text evidence="1">An essential GTPase that binds both GDP and GTP, with rapid nucleotide exchange. Plays a role in 16S rRNA processing and 30S ribosomal subunit biogenesis and possibly also in cell cycle regulation and energy metabolism.</text>
</comment>
<comment type="subunit">
    <text evidence="1">Monomer.</text>
</comment>
<comment type="subcellular location">
    <subcellularLocation>
        <location>Cytoplasm</location>
    </subcellularLocation>
    <subcellularLocation>
        <location evidence="1">Cell membrane</location>
        <topology evidence="1">Peripheral membrane protein</topology>
    </subcellularLocation>
</comment>
<comment type="similarity">
    <text evidence="1 2">Belongs to the TRAFAC class TrmE-Era-EngA-EngB-Septin-like GTPase superfamily. Era GTPase family.</text>
</comment>
<reference key="1">
    <citation type="journal article" date="1999" name="Science">
        <title>Genome sequence of the radioresistant bacterium Deinococcus radiodurans R1.</title>
        <authorList>
            <person name="White O."/>
            <person name="Eisen J.A."/>
            <person name="Heidelberg J.F."/>
            <person name="Hickey E.K."/>
            <person name="Peterson J.D."/>
            <person name="Dodson R.J."/>
            <person name="Haft D.H."/>
            <person name="Gwinn M.L."/>
            <person name="Nelson W.C."/>
            <person name="Richardson D.L."/>
            <person name="Moffat K.S."/>
            <person name="Qin H."/>
            <person name="Jiang L."/>
            <person name="Pamphile W."/>
            <person name="Crosby M."/>
            <person name="Shen M."/>
            <person name="Vamathevan J.J."/>
            <person name="Lam P."/>
            <person name="McDonald L.A."/>
            <person name="Utterback T.R."/>
            <person name="Zalewski C."/>
            <person name="Makarova K.S."/>
            <person name="Aravind L."/>
            <person name="Daly M.J."/>
            <person name="Minton K.W."/>
            <person name="Fleischmann R.D."/>
            <person name="Ketchum K.A."/>
            <person name="Nelson K.E."/>
            <person name="Salzberg S.L."/>
            <person name="Smith H.O."/>
            <person name="Venter J.C."/>
            <person name="Fraser C.M."/>
        </authorList>
    </citation>
    <scope>NUCLEOTIDE SEQUENCE [LARGE SCALE GENOMIC DNA]</scope>
    <source>
        <strain>ATCC 13939 / DSM 20539 / JCM 16871 / CCUG 27074 / LMG 4051 / NBRC 15346 / NCIMB 9279 / VKM B-1422 / R1</strain>
    </source>
</reference>
<gene>
    <name evidence="1" type="primary">era</name>
    <name type="ordered locus">DR_0646</name>
</gene>
<dbReference type="EMBL" id="AE000513">
    <property type="protein sequence ID" value="AAF10224.1"/>
    <property type="molecule type" value="Genomic_DNA"/>
</dbReference>
<dbReference type="PIR" id="C75493">
    <property type="entry name" value="C75493"/>
</dbReference>
<dbReference type="RefSeq" id="NP_294369.1">
    <property type="nucleotide sequence ID" value="NC_001263.1"/>
</dbReference>
<dbReference type="RefSeq" id="WP_010887291.1">
    <property type="nucleotide sequence ID" value="NC_001263.1"/>
</dbReference>
<dbReference type="SMR" id="Q9RWM0"/>
<dbReference type="FunCoup" id="Q9RWM0">
    <property type="interactions" value="444"/>
</dbReference>
<dbReference type="STRING" id="243230.DR_0646"/>
<dbReference type="PaxDb" id="243230-DR_0646"/>
<dbReference type="EnsemblBacteria" id="AAF10224">
    <property type="protein sequence ID" value="AAF10224"/>
    <property type="gene ID" value="DR_0646"/>
</dbReference>
<dbReference type="GeneID" id="69516893"/>
<dbReference type="KEGG" id="dra:DR_0646"/>
<dbReference type="PATRIC" id="fig|243230.17.peg.825"/>
<dbReference type="eggNOG" id="COG1159">
    <property type="taxonomic scope" value="Bacteria"/>
</dbReference>
<dbReference type="HOGENOM" id="CLU_038009_1_0_0"/>
<dbReference type="InParanoid" id="Q9RWM0"/>
<dbReference type="OrthoDB" id="9805918at2"/>
<dbReference type="Proteomes" id="UP000002524">
    <property type="component" value="Chromosome 1"/>
</dbReference>
<dbReference type="GO" id="GO:0005829">
    <property type="term" value="C:cytosol"/>
    <property type="evidence" value="ECO:0000318"/>
    <property type="project" value="GO_Central"/>
</dbReference>
<dbReference type="GO" id="GO:0005886">
    <property type="term" value="C:plasma membrane"/>
    <property type="evidence" value="ECO:0007669"/>
    <property type="project" value="UniProtKB-SubCell"/>
</dbReference>
<dbReference type="GO" id="GO:0005525">
    <property type="term" value="F:GTP binding"/>
    <property type="evidence" value="ECO:0007669"/>
    <property type="project" value="UniProtKB-UniRule"/>
</dbReference>
<dbReference type="GO" id="GO:0003924">
    <property type="term" value="F:GTPase activity"/>
    <property type="evidence" value="ECO:0007669"/>
    <property type="project" value="UniProtKB-UniRule"/>
</dbReference>
<dbReference type="GO" id="GO:0043024">
    <property type="term" value="F:ribosomal small subunit binding"/>
    <property type="evidence" value="ECO:0000318"/>
    <property type="project" value="GO_Central"/>
</dbReference>
<dbReference type="GO" id="GO:0019843">
    <property type="term" value="F:rRNA binding"/>
    <property type="evidence" value="ECO:0000318"/>
    <property type="project" value="GO_Central"/>
</dbReference>
<dbReference type="GO" id="GO:0070181">
    <property type="term" value="F:small ribosomal subunit rRNA binding"/>
    <property type="evidence" value="ECO:0007669"/>
    <property type="project" value="UniProtKB-UniRule"/>
</dbReference>
<dbReference type="GO" id="GO:0000028">
    <property type="term" value="P:ribosomal small subunit assembly"/>
    <property type="evidence" value="ECO:0000318"/>
    <property type="project" value="GO_Central"/>
</dbReference>
<dbReference type="CDD" id="cd04163">
    <property type="entry name" value="Era"/>
    <property type="match status" value="1"/>
</dbReference>
<dbReference type="CDD" id="cd22534">
    <property type="entry name" value="KH-II_Era"/>
    <property type="match status" value="1"/>
</dbReference>
<dbReference type="FunFam" id="3.30.300.20:FF:000003">
    <property type="entry name" value="GTPase Era"/>
    <property type="match status" value="1"/>
</dbReference>
<dbReference type="Gene3D" id="3.30.300.20">
    <property type="match status" value="1"/>
</dbReference>
<dbReference type="Gene3D" id="3.40.50.300">
    <property type="entry name" value="P-loop containing nucleotide triphosphate hydrolases"/>
    <property type="match status" value="1"/>
</dbReference>
<dbReference type="HAMAP" id="MF_00367">
    <property type="entry name" value="GTPase_Era"/>
    <property type="match status" value="1"/>
</dbReference>
<dbReference type="InterPro" id="IPR030388">
    <property type="entry name" value="G_ERA_dom"/>
</dbReference>
<dbReference type="InterPro" id="IPR006073">
    <property type="entry name" value="GTP-bd"/>
</dbReference>
<dbReference type="InterPro" id="IPR005662">
    <property type="entry name" value="GTPase_Era-like"/>
</dbReference>
<dbReference type="InterPro" id="IPR015946">
    <property type="entry name" value="KH_dom-like_a/b"/>
</dbReference>
<dbReference type="InterPro" id="IPR004044">
    <property type="entry name" value="KH_dom_type_2"/>
</dbReference>
<dbReference type="InterPro" id="IPR009019">
    <property type="entry name" value="KH_sf_prok-type"/>
</dbReference>
<dbReference type="InterPro" id="IPR027417">
    <property type="entry name" value="P-loop_NTPase"/>
</dbReference>
<dbReference type="InterPro" id="IPR005225">
    <property type="entry name" value="Small_GTP-bd"/>
</dbReference>
<dbReference type="NCBIfam" id="TIGR00436">
    <property type="entry name" value="era"/>
    <property type="match status" value="1"/>
</dbReference>
<dbReference type="NCBIfam" id="NF000908">
    <property type="entry name" value="PRK00089.1"/>
    <property type="match status" value="1"/>
</dbReference>
<dbReference type="NCBIfam" id="TIGR00231">
    <property type="entry name" value="small_GTP"/>
    <property type="match status" value="1"/>
</dbReference>
<dbReference type="PANTHER" id="PTHR42698">
    <property type="entry name" value="GTPASE ERA"/>
    <property type="match status" value="1"/>
</dbReference>
<dbReference type="PANTHER" id="PTHR42698:SF1">
    <property type="entry name" value="GTPASE ERA, MITOCHONDRIAL"/>
    <property type="match status" value="1"/>
</dbReference>
<dbReference type="Pfam" id="PF07650">
    <property type="entry name" value="KH_2"/>
    <property type="match status" value="1"/>
</dbReference>
<dbReference type="Pfam" id="PF01926">
    <property type="entry name" value="MMR_HSR1"/>
    <property type="match status" value="1"/>
</dbReference>
<dbReference type="PRINTS" id="PR00326">
    <property type="entry name" value="GTP1OBG"/>
</dbReference>
<dbReference type="SUPFAM" id="SSF52540">
    <property type="entry name" value="P-loop containing nucleoside triphosphate hydrolases"/>
    <property type="match status" value="1"/>
</dbReference>
<dbReference type="SUPFAM" id="SSF54814">
    <property type="entry name" value="Prokaryotic type KH domain (KH-domain type II)"/>
    <property type="match status" value="1"/>
</dbReference>
<dbReference type="PROSITE" id="PS51713">
    <property type="entry name" value="G_ERA"/>
    <property type="match status" value="1"/>
</dbReference>
<dbReference type="PROSITE" id="PS50823">
    <property type="entry name" value="KH_TYPE_2"/>
    <property type="match status" value="1"/>
</dbReference>
<protein>
    <recommendedName>
        <fullName evidence="1">GTPase Era</fullName>
    </recommendedName>
</protein>
<organism>
    <name type="scientific">Deinococcus radiodurans (strain ATCC 13939 / DSM 20539 / JCM 16871 / CCUG 27074 / LMG 4051 / NBRC 15346 / NCIMB 9279 / VKM B-1422 / R1)</name>
    <dbReference type="NCBI Taxonomy" id="243230"/>
    <lineage>
        <taxon>Bacteria</taxon>
        <taxon>Thermotogati</taxon>
        <taxon>Deinococcota</taxon>
        <taxon>Deinococci</taxon>
        <taxon>Deinococcales</taxon>
        <taxon>Deinococcaceae</taxon>
        <taxon>Deinococcus</taxon>
    </lineage>
</organism>